<accession>A7H6J3</accession>
<sequence>MARPDMGGPKSSGGFGGPRSGGGFGGGGYGGGGGGGGGYGGGGGGGFGGRGGDRGDRGDRDDRGGEEGGRRGFGRRKVCRFCADKTLKVDYKDQSQMKYFLTERGKIIPRRISGNCAKHQREVATAVKRGRMLAILPYTVGGM</sequence>
<name>RS18_ANADF</name>
<proteinExistence type="inferred from homology"/>
<dbReference type="EMBL" id="CP000769">
    <property type="protein sequence ID" value="ABS24339.1"/>
    <property type="molecule type" value="Genomic_DNA"/>
</dbReference>
<dbReference type="RefSeq" id="WP_011984445.1">
    <property type="nucleotide sequence ID" value="NC_009675.1"/>
</dbReference>
<dbReference type="SMR" id="A7H6J3"/>
<dbReference type="STRING" id="404589.Anae109_0121"/>
<dbReference type="KEGG" id="afw:Anae109_0121"/>
<dbReference type="eggNOG" id="COG0238">
    <property type="taxonomic scope" value="Bacteria"/>
</dbReference>
<dbReference type="HOGENOM" id="CLU_148710_0_2_7"/>
<dbReference type="OrthoDB" id="9812008at2"/>
<dbReference type="Proteomes" id="UP000006382">
    <property type="component" value="Chromosome"/>
</dbReference>
<dbReference type="GO" id="GO:0022627">
    <property type="term" value="C:cytosolic small ribosomal subunit"/>
    <property type="evidence" value="ECO:0007669"/>
    <property type="project" value="TreeGrafter"/>
</dbReference>
<dbReference type="GO" id="GO:0070181">
    <property type="term" value="F:small ribosomal subunit rRNA binding"/>
    <property type="evidence" value="ECO:0007669"/>
    <property type="project" value="TreeGrafter"/>
</dbReference>
<dbReference type="GO" id="GO:0003735">
    <property type="term" value="F:structural constituent of ribosome"/>
    <property type="evidence" value="ECO:0007669"/>
    <property type="project" value="InterPro"/>
</dbReference>
<dbReference type="GO" id="GO:0006412">
    <property type="term" value="P:translation"/>
    <property type="evidence" value="ECO:0007669"/>
    <property type="project" value="UniProtKB-UniRule"/>
</dbReference>
<dbReference type="Gene3D" id="4.10.640.10">
    <property type="entry name" value="Ribosomal protein S18"/>
    <property type="match status" value="1"/>
</dbReference>
<dbReference type="HAMAP" id="MF_00270">
    <property type="entry name" value="Ribosomal_bS18"/>
    <property type="match status" value="1"/>
</dbReference>
<dbReference type="InterPro" id="IPR001648">
    <property type="entry name" value="Ribosomal_bS18"/>
</dbReference>
<dbReference type="InterPro" id="IPR036870">
    <property type="entry name" value="Ribosomal_bS18_sf"/>
</dbReference>
<dbReference type="NCBIfam" id="TIGR00165">
    <property type="entry name" value="S18"/>
    <property type="match status" value="1"/>
</dbReference>
<dbReference type="PANTHER" id="PTHR13479">
    <property type="entry name" value="30S RIBOSOMAL PROTEIN S18"/>
    <property type="match status" value="1"/>
</dbReference>
<dbReference type="PANTHER" id="PTHR13479:SF40">
    <property type="entry name" value="SMALL RIBOSOMAL SUBUNIT PROTEIN BS18M"/>
    <property type="match status" value="1"/>
</dbReference>
<dbReference type="Pfam" id="PF01084">
    <property type="entry name" value="Ribosomal_S18"/>
    <property type="match status" value="1"/>
</dbReference>
<dbReference type="PRINTS" id="PR00974">
    <property type="entry name" value="RIBOSOMALS18"/>
</dbReference>
<dbReference type="SUPFAM" id="SSF46911">
    <property type="entry name" value="Ribosomal protein S18"/>
    <property type="match status" value="1"/>
</dbReference>
<comment type="function">
    <text evidence="1">Binds as a heterodimer with protein bS6 to the central domain of the 16S rRNA, where it helps stabilize the platform of the 30S subunit.</text>
</comment>
<comment type="subunit">
    <text evidence="1">Part of the 30S ribosomal subunit. Forms a tight heterodimer with protein bS6.</text>
</comment>
<comment type="similarity">
    <text evidence="1">Belongs to the bacterial ribosomal protein bS18 family.</text>
</comment>
<evidence type="ECO:0000255" key="1">
    <source>
        <dbReference type="HAMAP-Rule" id="MF_00270"/>
    </source>
</evidence>
<evidence type="ECO:0000256" key="2">
    <source>
        <dbReference type="SAM" id="MobiDB-lite"/>
    </source>
</evidence>
<evidence type="ECO:0000305" key="3"/>
<protein>
    <recommendedName>
        <fullName evidence="1">Small ribosomal subunit protein bS18</fullName>
    </recommendedName>
    <alternativeName>
        <fullName evidence="3">30S ribosomal protein S18</fullName>
    </alternativeName>
</protein>
<gene>
    <name evidence="1" type="primary">rpsR</name>
    <name type="ordered locus">Anae109_0121</name>
</gene>
<keyword id="KW-1185">Reference proteome</keyword>
<keyword id="KW-0687">Ribonucleoprotein</keyword>
<keyword id="KW-0689">Ribosomal protein</keyword>
<keyword id="KW-0694">RNA-binding</keyword>
<keyword id="KW-0699">rRNA-binding</keyword>
<reference key="1">
    <citation type="journal article" date="2015" name="Genome Announc.">
        <title>Complete genome sequence of Anaeromyxobacter sp. Fw109-5, an anaerobic, metal-reducing bacterium isolated from a contaminated subsurface environment.</title>
        <authorList>
            <person name="Hwang C."/>
            <person name="Copeland A."/>
            <person name="Lucas S."/>
            <person name="Lapidus A."/>
            <person name="Barry K."/>
            <person name="Glavina Del Rio T."/>
            <person name="Dalin E."/>
            <person name="Tice H."/>
            <person name="Pitluck S."/>
            <person name="Sims D."/>
            <person name="Brettin T."/>
            <person name="Bruce D.C."/>
            <person name="Detter J.C."/>
            <person name="Han C.S."/>
            <person name="Schmutz J."/>
            <person name="Larimer F.W."/>
            <person name="Land M.L."/>
            <person name="Hauser L.J."/>
            <person name="Kyrpides N."/>
            <person name="Lykidis A."/>
            <person name="Richardson P."/>
            <person name="Belieav A."/>
            <person name="Sanford R.A."/>
            <person name="Loeffler F.E."/>
            <person name="Fields M.W."/>
        </authorList>
    </citation>
    <scope>NUCLEOTIDE SEQUENCE [LARGE SCALE GENOMIC DNA]</scope>
    <source>
        <strain>Fw109-5</strain>
    </source>
</reference>
<organism>
    <name type="scientific">Anaeromyxobacter sp. (strain Fw109-5)</name>
    <dbReference type="NCBI Taxonomy" id="404589"/>
    <lineage>
        <taxon>Bacteria</taxon>
        <taxon>Pseudomonadati</taxon>
        <taxon>Myxococcota</taxon>
        <taxon>Myxococcia</taxon>
        <taxon>Myxococcales</taxon>
        <taxon>Cystobacterineae</taxon>
        <taxon>Anaeromyxobacteraceae</taxon>
        <taxon>Anaeromyxobacter</taxon>
    </lineage>
</organism>
<feature type="chain" id="PRO_0000345437" description="Small ribosomal subunit protein bS18">
    <location>
        <begin position="1"/>
        <end position="143"/>
    </location>
</feature>
<feature type="region of interest" description="Disordered" evidence="2">
    <location>
        <begin position="1"/>
        <end position="72"/>
    </location>
</feature>
<feature type="compositionally biased region" description="Gly residues" evidence="2">
    <location>
        <begin position="10"/>
        <end position="50"/>
    </location>
</feature>
<feature type="compositionally biased region" description="Basic and acidic residues" evidence="2">
    <location>
        <begin position="51"/>
        <end position="70"/>
    </location>
</feature>